<reference key="1">
    <citation type="journal article" date="1990" name="Gene">
        <title>Isolation and characterisation of the crnA-niiA-niaD gene cluster for nitrate assimilation in Aspergillus nidulans.</title>
        <authorList>
            <person name="Johnstone I.L."/>
            <person name="McCabe P.C."/>
            <person name="Greaves P."/>
            <person name="Gurr S.J."/>
            <person name="Cole G.E."/>
            <person name="Brow M.A.D."/>
            <person name="Unkles S.E."/>
            <person name="Clutterbuck A.J."/>
            <person name="Kinghorn J.R."/>
            <person name="Innis M.A."/>
        </authorList>
    </citation>
    <scope>NUCLEOTIDE SEQUENCE [GENOMIC DNA]</scope>
</reference>
<reference key="2">
    <citation type="journal article" date="2005" name="Nature">
        <title>Sequencing of Aspergillus nidulans and comparative analysis with A. fumigatus and A. oryzae.</title>
        <authorList>
            <person name="Galagan J.E."/>
            <person name="Calvo S.E."/>
            <person name="Cuomo C."/>
            <person name="Ma L.-J."/>
            <person name="Wortman J.R."/>
            <person name="Batzoglou S."/>
            <person name="Lee S.-I."/>
            <person name="Bastuerkmen M."/>
            <person name="Spevak C.C."/>
            <person name="Clutterbuck J."/>
            <person name="Kapitonov V."/>
            <person name="Jurka J."/>
            <person name="Scazzocchio C."/>
            <person name="Farman M.L."/>
            <person name="Butler J."/>
            <person name="Purcell S."/>
            <person name="Harris S."/>
            <person name="Braus G.H."/>
            <person name="Draht O."/>
            <person name="Busch S."/>
            <person name="D'Enfert C."/>
            <person name="Bouchier C."/>
            <person name="Goldman G.H."/>
            <person name="Bell-Pedersen D."/>
            <person name="Griffiths-Jones S."/>
            <person name="Doonan J.H."/>
            <person name="Yu J."/>
            <person name="Vienken K."/>
            <person name="Pain A."/>
            <person name="Freitag M."/>
            <person name="Selker E.U."/>
            <person name="Archer D.B."/>
            <person name="Penalva M.A."/>
            <person name="Oakley B.R."/>
            <person name="Momany M."/>
            <person name="Tanaka T."/>
            <person name="Kumagai T."/>
            <person name="Asai K."/>
            <person name="Machida M."/>
            <person name="Nierman W.C."/>
            <person name="Denning D.W."/>
            <person name="Caddick M.X."/>
            <person name="Hynes M."/>
            <person name="Paoletti M."/>
            <person name="Fischer R."/>
            <person name="Miller B.L."/>
            <person name="Dyer P.S."/>
            <person name="Sachs M.S."/>
            <person name="Osmani S.A."/>
            <person name="Birren B.W."/>
        </authorList>
    </citation>
    <scope>NUCLEOTIDE SEQUENCE [LARGE SCALE GENOMIC DNA]</scope>
    <source>
        <strain>FGSC A4 / ATCC 38163 / CBS 112.46 / NRRL 194 / M139</strain>
    </source>
</reference>
<reference key="3">
    <citation type="journal article" date="2009" name="Fungal Genet. Biol.">
        <title>The 2008 update of the Aspergillus nidulans genome annotation: a community effort.</title>
        <authorList>
            <person name="Wortman J.R."/>
            <person name="Gilsenan J.M."/>
            <person name="Joardar V."/>
            <person name="Deegan J."/>
            <person name="Clutterbuck J."/>
            <person name="Andersen M.R."/>
            <person name="Archer D."/>
            <person name="Bencina M."/>
            <person name="Braus G."/>
            <person name="Coutinho P."/>
            <person name="von Dohren H."/>
            <person name="Doonan J."/>
            <person name="Driessen A.J."/>
            <person name="Durek P."/>
            <person name="Espeso E."/>
            <person name="Fekete E."/>
            <person name="Flipphi M."/>
            <person name="Estrada C.G."/>
            <person name="Geysens S."/>
            <person name="Goldman G."/>
            <person name="de Groot P.W."/>
            <person name="Hansen K."/>
            <person name="Harris S.D."/>
            <person name="Heinekamp T."/>
            <person name="Helmstaedt K."/>
            <person name="Henrissat B."/>
            <person name="Hofmann G."/>
            <person name="Homan T."/>
            <person name="Horio T."/>
            <person name="Horiuchi H."/>
            <person name="James S."/>
            <person name="Jones M."/>
            <person name="Karaffa L."/>
            <person name="Karanyi Z."/>
            <person name="Kato M."/>
            <person name="Keller N."/>
            <person name="Kelly D.E."/>
            <person name="Kiel J.A."/>
            <person name="Kim J.M."/>
            <person name="van der Klei I.J."/>
            <person name="Klis F.M."/>
            <person name="Kovalchuk A."/>
            <person name="Krasevec N."/>
            <person name="Kubicek C.P."/>
            <person name="Liu B."/>
            <person name="Maccabe A."/>
            <person name="Meyer V."/>
            <person name="Mirabito P."/>
            <person name="Miskei M."/>
            <person name="Mos M."/>
            <person name="Mullins J."/>
            <person name="Nelson D.R."/>
            <person name="Nielsen J."/>
            <person name="Oakley B.R."/>
            <person name="Osmani S.A."/>
            <person name="Pakula T."/>
            <person name="Paszewski A."/>
            <person name="Paulsen I."/>
            <person name="Pilsyk S."/>
            <person name="Pocsi I."/>
            <person name="Punt P.J."/>
            <person name="Ram A.F."/>
            <person name="Ren Q."/>
            <person name="Robellet X."/>
            <person name="Robson G."/>
            <person name="Seiboth B."/>
            <person name="van Solingen P."/>
            <person name="Specht T."/>
            <person name="Sun J."/>
            <person name="Taheri-Talesh N."/>
            <person name="Takeshita N."/>
            <person name="Ussery D."/>
            <person name="vanKuyk P.A."/>
            <person name="Visser H."/>
            <person name="van de Vondervoort P.J."/>
            <person name="de Vries R.P."/>
            <person name="Walton J."/>
            <person name="Xiang X."/>
            <person name="Xiong Y."/>
            <person name="Zeng A.P."/>
            <person name="Brandt B.W."/>
            <person name="Cornell M.J."/>
            <person name="van den Hondel C.A."/>
            <person name="Visser J."/>
            <person name="Oliver S.G."/>
            <person name="Turner G."/>
        </authorList>
    </citation>
    <scope>GENOME REANNOTATION</scope>
    <source>
        <strain>FGSC A4 / ATCC 38163 / CBS 112.46 / NRRL 194 / M139</strain>
    </source>
</reference>
<evidence type="ECO:0000250" key="1"/>
<evidence type="ECO:0000250" key="2">
    <source>
        <dbReference type="UniProtKB" id="A0A286R227"/>
    </source>
</evidence>
<evidence type="ECO:0000250" key="3">
    <source>
        <dbReference type="UniProtKB" id="P49050"/>
    </source>
</evidence>
<evidence type="ECO:0000255" key="4"/>
<evidence type="ECO:0000255" key="5">
    <source>
        <dbReference type="PROSITE-ProRule" id="PRU00279"/>
    </source>
</evidence>
<evidence type="ECO:0000255" key="6">
    <source>
        <dbReference type="PROSITE-ProRule" id="PRU00716"/>
    </source>
</evidence>
<evidence type="ECO:0000256" key="7">
    <source>
        <dbReference type="SAM" id="MobiDB-lite"/>
    </source>
</evidence>
<evidence type="ECO:0000305" key="8"/>
<organism>
    <name type="scientific">Emericella nidulans (strain FGSC A4 / ATCC 38163 / CBS 112.46 / NRRL 194 / M139)</name>
    <name type="common">Aspergillus nidulans</name>
    <dbReference type="NCBI Taxonomy" id="227321"/>
    <lineage>
        <taxon>Eukaryota</taxon>
        <taxon>Fungi</taxon>
        <taxon>Dikarya</taxon>
        <taxon>Ascomycota</taxon>
        <taxon>Pezizomycotina</taxon>
        <taxon>Eurotiomycetes</taxon>
        <taxon>Eurotiomycetidae</taxon>
        <taxon>Eurotiales</taxon>
        <taxon>Aspergillaceae</taxon>
        <taxon>Aspergillus</taxon>
        <taxon>Aspergillus subgen. Nidulantes</taxon>
    </lineage>
</organism>
<comment type="function">
    <text>Nitrate reductase is a key enzyme involved in the first step of nitrate assimilation in plants, fungi and bacteria.</text>
</comment>
<comment type="catalytic activity">
    <reaction>
        <text>nitrite + NADP(+) + H2O = nitrate + NADPH + H(+)</text>
        <dbReference type="Rhea" id="RHEA:19061"/>
        <dbReference type="ChEBI" id="CHEBI:15377"/>
        <dbReference type="ChEBI" id="CHEBI:15378"/>
        <dbReference type="ChEBI" id="CHEBI:16301"/>
        <dbReference type="ChEBI" id="CHEBI:17632"/>
        <dbReference type="ChEBI" id="CHEBI:57783"/>
        <dbReference type="ChEBI" id="CHEBI:58349"/>
        <dbReference type="EC" id="1.7.1.3"/>
    </reaction>
</comment>
<comment type="cofactor">
    <cofactor evidence="1">
        <name>FAD</name>
        <dbReference type="ChEBI" id="CHEBI:57692"/>
    </cofactor>
    <text evidence="1">Binds 1 FAD.</text>
</comment>
<comment type="cofactor">
    <cofactor evidence="1">
        <name>heme</name>
        <dbReference type="ChEBI" id="CHEBI:30413"/>
    </cofactor>
    <text evidence="1">Binds 1 heme group. The heme group is called cytochrome b-557.</text>
</comment>
<comment type="cofactor">
    <cofactor evidence="1">
        <name>Mo-molybdopterin</name>
        <dbReference type="ChEBI" id="CHEBI:71302"/>
    </cofactor>
    <text evidence="1">Binds 1 Mo-molybdopterin (Mo-MPT) cofactor per subunit.</text>
</comment>
<comment type="subunit">
    <text evidence="1">Homodimer.</text>
</comment>
<comment type="similarity">
    <text evidence="8">Belongs to the nitrate reductase family.</text>
</comment>
<feature type="chain" id="PRO_0000166042" description="Nitrate reductase [NADPH]">
    <location>
        <begin position="1"/>
        <end position="873"/>
    </location>
</feature>
<feature type="domain" description="Cytochrome b5 heme-binding" evidence="5">
    <location>
        <begin position="512"/>
        <end position="587"/>
    </location>
</feature>
<feature type="domain" description="FAD-binding FR-type" evidence="6">
    <location>
        <begin position="616"/>
        <end position="729"/>
    </location>
</feature>
<feature type="region of interest" description="Disordered" evidence="7">
    <location>
        <begin position="30"/>
        <end position="61"/>
    </location>
</feature>
<feature type="binding site" evidence="3">
    <location>
        <position position="150"/>
    </location>
    <ligand>
        <name>Mo-molybdopterin</name>
        <dbReference type="ChEBI" id="CHEBI:71302"/>
    </ligand>
    <ligandPart>
        <name>Mo</name>
        <dbReference type="ChEBI" id="CHEBI:28685"/>
    </ligandPart>
</feature>
<feature type="binding site" description="axial binding residue" evidence="5">
    <location>
        <position position="547"/>
    </location>
    <ligand>
        <name>heme</name>
        <dbReference type="ChEBI" id="CHEBI:30413"/>
    </ligand>
    <ligandPart>
        <name>Fe</name>
        <dbReference type="ChEBI" id="CHEBI:18248"/>
    </ligandPart>
</feature>
<feature type="binding site" description="axial binding residue" evidence="5">
    <location>
        <position position="570"/>
    </location>
    <ligand>
        <name>heme</name>
        <dbReference type="ChEBI" id="CHEBI:30413"/>
    </ligand>
    <ligandPart>
        <name>Fe</name>
        <dbReference type="ChEBI" id="CHEBI:18248"/>
    </ligandPart>
</feature>
<feature type="binding site" evidence="2">
    <location>
        <begin position="672"/>
        <end position="675"/>
    </location>
    <ligand>
        <name>FAD</name>
        <dbReference type="ChEBI" id="CHEBI:57692"/>
    </ligand>
</feature>
<feature type="binding site" evidence="2">
    <location>
        <begin position="689"/>
        <end position="693"/>
    </location>
    <ligand>
        <name>FAD</name>
        <dbReference type="ChEBI" id="CHEBI:57692"/>
    </ligand>
</feature>
<feature type="binding site" evidence="2">
    <location>
        <begin position="703"/>
        <end position="705"/>
    </location>
    <ligand>
        <name>FAD</name>
        <dbReference type="ChEBI" id="CHEBI:57692"/>
    </ligand>
</feature>
<feature type="binding site" evidence="2">
    <location>
        <position position="756"/>
    </location>
    <ligand>
        <name>FAD</name>
        <dbReference type="ChEBI" id="CHEBI:57692"/>
    </ligand>
</feature>
<feature type="binding site" evidence="1">
    <location>
        <begin position="843"/>
        <end position="852"/>
    </location>
    <ligand>
        <name>NADP(+)</name>
        <dbReference type="ChEBI" id="CHEBI:58349"/>
    </ligand>
</feature>
<feature type="disulfide bond" description="Interchain" evidence="4">
    <location>
        <position position="397"/>
    </location>
</feature>
<keyword id="KW-1015">Disulfide bond</keyword>
<keyword id="KW-0274">FAD</keyword>
<keyword id="KW-0285">Flavoprotein</keyword>
<keyword id="KW-0349">Heme</keyword>
<keyword id="KW-0408">Iron</keyword>
<keyword id="KW-0479">Metal-binding</keyword>
<keyword id="KW-0500">Molybdenum</keyword>
<keyword id="KW-0521">NADP</keyword>
<keyword id="KW-0534">Nitrate assimilation</keyword>
<keyword id="KW-0560">Oxidoreductase</keyword>
<keyword id="KW-1185">Reference proteome</keyword>
<dbReference type="EC" id="1.7.1.3"/>
<dbReference type="EMBL" id="M58291">
    <property type="protein sequence ID" value="AAA33314.1"/>
    <property type="molecule type" value="Genomic_DNA"/>
</dbReference>
<dbReference type="EMBL" id="AACD01000015">
    <property type="protein sequence ID" value="EAA65574.1"/>
    <property type="molecule type" value="Genomic_DNA"/>
</dbReference>
<dbReference type="EMBL" id="BN001308">
    <property type="protein sequence ID" value="CBF88350.1"/>
    <property type="molecule type" value="Genomic_DNA"/>
</dbReference>
<dbReference type="PIR" id="JH0182">
    <property type="entry name" value="JH0182"/>
</dbReference>
<dbReference type="RefSeq" id="XP_658610.1">
    <property type="nucleotide sequence ID" value="XM_653518.1"/>
</dbReference>
<dbReference type="SMR" id="P22945"/>
<dbReference type="STRING" id="227321.P22945"/>
<dbReference type="EnsemblFungi" id="CBF88350">
    <property type="protein sequence ID" value="CBF88350"/>
    <property type="gene ID" value="ANIA_01006"/>
</dbReference>
<dbReference type="GeneID" id="2876780"/>
<dbReference type="KEGG" id="ani:ANIA_01006"/>
<dbReference type="VEuPathDB" id="FungiDB:AN1006"/>
<dbReference type="eggNOG" id="KOG0534">
    <property type="taxonomic scope" value="Eukaryota"/>
</dbReference>
<dbReference type="eggNOG" id="KOG0535">
    <property type="taxonomic scope" value="Eukaryota"/>
</dbReference>
<dbReference type="eggNOG" id="KOG0537">
    <property type="taxonomic scope" value="Eukaryota"/>
</dbReference>
<dbReference type="HOGENOM" id="CLU_003827_4_0_1"/>
<dbReference type="InParanoid" id="P22945"/>
<dbReference type="OMA" id="KAMMPDY"/>
<dbReference type="OrthoDB" id="432685at2759"/>
<dbReference type="Proteomes" id="UP000000560">
    <property type="component" value="Chromosome VIII"/>
</dbReference>
<dbReference type="GO" id="GO:0071949">
    <property type="term" value="F:FAD binding"/>
    <property type="evidence" value="ECO:0000250"/>
    <property type="project" value="UniProtKB"/>
</dbReference>
<dbReference type="GO" id="GO:0020037">
    <property type="term" value="F:heme binding"/>
    <property type="evidence" value="ECO:0007669"/>
    <property type="project" value="InterPro"/>
</dbReference>
<dbReference type="GO" id="GO:0030151">
    <property type="term" value="F:molybdenum ion binding"/>
    <property type="evidence" value="ECO:0000250"/>
    <property type="project" value="UniProtKB"/>
</dbReference>
<dbReference type="GO" id="GO:0043546">
    <property type="term" value="F:molybdopterin cofactor binding"/>
    <property type="evidence" value="ECO:0007669"/>
    <property type="project" value="InterPro"/>
</dbReference>
<dbReference type="GO" id="GO:0050464">
    <property type="term" value="F:nitrate reductase (NADPH) activity"/>
    <property type="evidence" value="ECO:0000314"/>
    <property type="project" value="AspGD"/>
</dbReference>
<dbReference type="GO" id="GO:0009061">
    <property type="term" value="P:anaerobic respiration"/>
    <property type="evidence" value="ECO:0000315"/>
    <property type="project" value="UniProtKB"/>
</dbReference>
<dbReference type="GO" id="GO:0042128">
    <property type="term" value="P:nitrate assimilation"/>
    <property type="evidence" value="ECO:0007669"/>
    <property type="project" value="UniProtKB-KW"/>
</dbReference>
<dbReference type="GO" id="GO:0006809">
    <property type="term" value="P:nitric oxide biosynthetic process"/>
    <property type="evidence" value="ECO:0007669"/>
    <property type="project" value="InterPro"/>
</dbReference>
<dbReference type="CDD" id="cd06183">
    <property type="entry name" value="cyt_b5_reduct_like"/>
    <property type="match status" value="1"/>
</dbReference>
<dbReference type="FunFam" id="2.60.40.650:FF:000001">
    <property type="entry name" value="Nitrate reductase"/>
    <property type="match status" value="1"/>
</dbReference>
<dbReference type="FunFam" id="3.10.120.10:FF:000016">
    <property type="entry name" value="Nitrate reductase"/>
    <property type="match status" value="1"/>
</dbReference>
<dbReference type="FunFam" id="3.40.50.80:FF:000049">
    <property type="entry name" value="Nitrate reductase"/>
    <property type="match status" value="1"/>
</dbReference>
<dbReference type="FunFam" id="3.90.420.10:FF:000005">
    <property type="entry name" value="Nitrate reductase"/>
    <property type="match status" value="1"/>
</dbReference>
<dbReference type="Gene3D" id="2.60.40.650">
    <property type="match status" value="1"/>
</dbReference>
<dbReference type="Gene3D" id="3.10.120.10">
    <property type="entry name" value="Cytochrome b5-like heme/steroid binding domain"/>
    <property type="match status" value="1"/>
</dbReference>
<dbReference type="Gene3D" id="3.40.50.80">
    <property type="entry name" value="Nucleotide-binding domain of ferredoxin-NADP reductase (FNR) module"/>
    <property type="match status" value="1"/>
</dbReference>
<dbReference type="Gene3D" id="3.90.420.10">
    <property type="entry name" value="Oxidoreductase, molybdopterin-binding domain"/>
    <property type="match status" value="1"/>
</dbReference>
<dbReference type="Gene3D" id="2.40.30.10">
    <property type="entry name" value="Translation factors"/>
    <property type="match status" value="1"/>
</dbReference>
<dbReference type="InterPro" id="IPR008333">
    <property type="entry name" value="Cbr1-like_FAD-bd_dom"/>
</dbReference>
<dbReference type="InterPro" id="IPR001199">
    <property type="entry name" value="Cyt_B5-like_heme/steroid-bd"/>
</dbReference>
<dbReference type="InterPro" id="IPR036400">
    <property type="entry name" value="Cyt_B5-like_heme/steroid_sf"/>
</dbReference>
<dbReference type="InterPro" id="IPR018506">
    <property type="entry name" value="Cyt_B5_heme-BS"/>
</dbReference>
<dbReference type="InterPro" id="IPR017927">
    <property type="entry name" value="FAD-bd_FR_type"/>
</dbReference>
<dbReference type="InterPro" id="IPR001709">
    <property type="entry name" value="Flavoprot_Pyr_Nucl_cyt_Rdtase"/>
</dbReference>
<dbReference type="InterPro" id="IPR039261">
    <property type="entry name" value="FNR_nucleotide-bd"/>
</dbReference>
<dbReference type="InterPro" id="IPR014756">
    <property type="entry name" value="Ig_E-set"/>
</dbReference>
<dbReference type="InterPro" id="IPR005066">
    <property type="entry name" value="MoCF_OxRdtse_dimer"/>
</dbReference>
<dbReference type="InterPro" id="IPR008335">
    <property type="entry name" value="Mopterin_OxRdtase_euk"/>
</dbReference>
<dbReference type="InterPro" id="IPR012137">
    <property type="entry name" value="Nitr_rd_NADH"/>
</dbReference>
<dbReference type="InterPro" id="IPR001433">
    <property type="entry name" value="OxRdtase_FAD/NAD-bd"/>
</dbReference>
<dbReference type="InterPro" id="IPR000572">
    <property type="entry name" value="OxRdtase_Mopterin-bd_dom"/>
</dbReference>
<dbReference type="InterPro" id="IPR036374">
    <property type="entry name" value="OxRdtase_Mopterin-bd_sf"/>
</dbReference>
<dbReference type="InterPro" id="IPR022407">
    <property type="entry name" value="OxRdtase_Mopterin_BS"/>
</dbReference>
<dbReference type="InterPro" id="IPR017938">
    <property type="entry name" value="Riboflavin_synthase-like_b-brl"/>
</dbReference>
<dbReference type="PANTHER" id="PTHR19372:SF7">
    <property type="entry name" value="SULFITE OXIDASE, MITOCHONDRIAL"/>
    <property type="match status" value="1"/>
</dbReference>
<dbReference type="PANTHER" id="PTHR19372">
    <property type="entry name" value="SULFITE REDUCTASE"/>
    <property type="match status" value="1"/>
</dbReference>
<dbReference type="Pfam" id="PF00173">
    <property type="entry name" value="Cyt-b5"/>
    <property type="match status" value="1"/>
</dbReference>
<dbReference type="Pfam" id="PF00970">
    <property type="entry name" value="FAD_binding_6"/>
    <property type="match status" value="1"/>
</dbReference>
<dbReference type="Pfam" id="PF03404">
    <property type="entry name" value="Mo-co_dimer"/>
    <property type="match status" value="1"/>
</dbReference>
<dbReference type="Pfam" id="PF00175">
    <property type="entry name" value="NAD_binding_1"/>
    <property type="match status" value="1"/>
</dbReference>
<dbReference type="Pfam" id="PF00174">
    <property type="entry name" value="Oxidored_molyb"/>
    <property type="match status" value="1"/>
</dbReference>
<dbReference type="PIRSF" id="PIRSF000233">
    <property type="entry name" value="Nitr_rd_NADH"/>
    <property type="match status" value="1"/>
</dbReference>
<dbReference type="PRINTS" id="PR00406">
    <property type="entry name" value="CYTB5RDTASE"/>
</dbReference>
<dbReference type="PRINTS" id="PR00363">
    <property type="entry name" value="CYTOCHROMEB5"/>
</dbReference>
<dbReference type="PRINTS" id="PR00407">
    <property type="entry name" value="EUMOPTERIN"/>
</dbReference>
<dbReference type="PRINTS" id="PR00371">
    <property type="entry name" value="FPNCR"/>
</dbReference>
<dbReference type="SMART" id="SM01117">
    <property type="entry name" value="Cyt-b5"/>
    <property type="match status" value="1"/>
</dbReference>
<dbReference type="SUPFAM" id="SSF55856">
    <property type="entry name" value="Cytochrome b5-like heme/steroid binding domain"/>
    <property type="match status" value="1"/>
</dbReference>
<dbReference type="SUPFAM" id="SSF81296">
    <property type="entry name" value="E set domains"/>
    <property type="match status" value="1"/>
</dbReference>
<dbReference type="SUPFAM" id="SSF52343">
    <property type="entry name" value="Ferredoxin reductase-like, C-terminal NADP-linked domain"/>
    <property type="match status" value="1"/>
</dbReference>
<dbReference type="SUPFAM" id="SSF56524">
    <property type="entry name" value="Oxidoreductase molybdopterin-binding domain"/>
    <property type="match status" value="1"/>
</dbReference>
<dbReference type="SUPFAM" id="SSF63380">
    <property type="entry name" value="Riboflavin synthase domain-like"/>
    <property type="match status" value="1"/>
</dbReference>
<dbReference type="PROSITE" id="PS00191">
    <property type="entry name" value="CYTOCHROME_B5_1"/>
    <property type="match status" value="1"/>
</dbReference>
<dbReference type="PROSITE" id="PS50255">
    <property type="entry name" value="CYTOCHROME_B5_2"/>
    <property type="match status" value="1"/>
</dbReference>
<dbReference type="PROSITE" id="PS51384">
    <property type="entry name" value="FAD_FR"/>
    <property type="match status" value="1"/>
</dbReference>
<dbReference type="PROSITE" id="PS00559">
    <property type="entry name" value="MOLYBDOPTERIN_EUK"/>
    <property type="match status" value="1"/>
</dbReference>
<accession>P22945</accession>
<accession>C8VU60</accession>
<accession>Q5BEM4</accession>
<protein>
    <recommendedName>
        <fullName>Nitrate reductase [NADPH]</fullName>
        <shortName>NR</shortName>
        <ecNumber>1.7.1.3</ecNumber>
    </recommendedName>
</protein>
<proteinExistence type="inferred from homology"/>
<name>NIA_EMENI</name>
<sequence length="873" mass="97560">MSTTVTQVRTGSIPKTLKTSQIRVEEQEITELDTADIPLPPPSKEPTEVLSLDKTTPDSHVPRDPRLIRLTGVHPFNVEPPLTALFQQGFLTPPELFYVRNHGPVPHVRDEDIPNWELRIEGLVEKPITLSFKQILQNYDQITAPITLVCAGNRRKEQNTVRKSKGFSWGSAALSTALFTGPMMADIIKSAKPLRRAKYVCMEGADNLPNGNYGTSIKLNWAMDPNRGIMLAHKMNGEDLRPDHGRPLRAVVPGQIGGRSVKWLKKLIITDAPSDNWYHIYDNRVLPTMVTPDMSSQNPSWWRDERYAIYDLNVNSAAVYPQHKETLDLAAARPFYTAKGYAYAGGGRRITRVEISLDKGKSWRLARIEYAEDKYRDFEGTLYGGRVDMAWREACFCWSFWSLDIPVSELASSDALLVRAMDEALSLQPKDMYWSVLGMMNNPWFRVKITNENGRLLFEHPTDITGSSGWMEQIKKAGGDLTNGNWGERQEGEEPVEAEPVVEVNMKKEGVTRIIDLEEFKKNSSDERPWFVVNGEVYDGTAFLEGHPGGAQSIISAAGTDASEEFLEIHSETAKKMMPDYHIGTLDKASLEALRKGNADTTDSSSDPRPTFLTPKAWTKATLTKKTSVSSDTHIFTLSLEHPSQALGLPTGQHLMLKTPDPKSSSSGSIIRSYTPISPSDQLGMVDILIKIYAETPSIPGGKMTTALDTLPLGSVIECKGPTGRFEYLDRGRVLISGKERFVKSFVMICGGTGITPVFQVLRAVMQDEQDETKCVMLDGNRLEEDILLKNELDEFEALAGKKEKCKIVHTLTKGSESWTGRRGRIDEELIRQHAGTPDRETMVLVCGPEAMEKASKKILLSLGWKEENLHYF</sequence>
<gene>
    <name type="primary">niaD</name>
    <name type="ORF">AN1006</name>
</gene>